<organism>
    <name type="scientific">Bradyrhizobium sp. (strain BTAi1 / ATCC BAA-1182)</name>
    <dbReference type="NCBI Taxonomy" id="288000"/>
    <lineage>
        <taxon>Bacteria</taxon>
        <taxon>Pseudomonadati</taxon>
        <taxon>Pseudomonadota</taxon>
        <taxon>Alphaproteobacteria</taxon>
        <taxon>Hyphomicrobiales</taxon>
        <taxon>Nitrobacteraceae</taxon>
        <taxon>Bradyrhizobium</taxon>
    </lineage>
</organism>
<reference key="1">
    <citation type="journal article" date="2007" name="Science">
        <title>Legumes symbioses: absence of nod genes in photosynthetic bradyrhizobia.</title>
        <authorList>
            <person name="Giraud E."/>
            <person name="Moulin L."/>
            <person name="Vallenet D."/>
            <person name="Barbe V."/>
            <person name="Cytryn E."/>
            <person name="Avarre J.-C."/>
            <person name="Jaubert M."/>
            <person name="Simon D."/>
            <person name="Cartieaux F."/>
            <person name="Prin Y."/>
            <person name="Bena G."/>
            <person name="Hannibal L."/>
            <person name="Fardoux J."/>
            <person name="Kojadinovic M."/>
            <person name="Vuillet L."/>
            <person name="Lajus A."/>
            <person name="Cruveiller S."/>
            <person name="Rouy Z."/>
            <person name="Mangenot S."/>
            <person name="Segurens B."/>
            <person name="Dossat C."/>
            <person name="Franck W.L."/>
            <person name="Chang W.-S."/>
            <person name="Saunders E."/>
            <person name="Bruce D."/>
            <person name="Richardson P."/>
            <person name="Normand P."/>
            <person name="Dreyfus B."/>
            <person name="Pignol D."/>
            <person name="Stacey G."/>
            <person name="Emerich D."/>
            <person name="Vermeglio A."/>
            <person name="Medigue C."/>
            <person name="Sadowsky M."/>
        </authorList>
    </citation>
    <scope>NUCLEOTIDE SEQUENCE [LARGE SCALE GENOMIC DNA]</scope>
    <source>
        <strain>BTAi1 / ATCC BAA-1182</strain>
    </source>
</reference>
<evidence type="ECO:0000255" key="1">
    <source>
        <dbReference type="HAMAP-Rule" id="MF_01547"/>
    </source>
</evidence>
<name>RLME_BRASB</name>
<gene>
    <name evidence="1" type="primary">rlmE</name>
    <name evidence="1" type="synonym">ftsJ</name>
    <name evidence="1" type="synonym">rrmJ</name>
    <name type="ordered locus">BBta_3597</name>
</gene>
<proteinExistence type="inferred from homology"/>
<dbReference type="EC" id="2.1.1.166" evidence="1"/>
<dbReference type="EMBL" id="CP000494">
    <property type="protein sequence ID" value="ABQ35686.1"/>
    <property type="molecule type" value="Genomic_DNA"/>
</dbReference>
<dbReference type="RefSeq" id="WP_012043695.1">
    <property type="nucleotide sequence ID" value="NC_009485.1"/>
</dbReference>
<dbReference type="SMR" id="A5EHP2"/>
<dbReference type="STRING" id="288000.BBta_3597"/>
<dbReference type="KEGG" id="bbt:BBta_3597"/>
<dbReference type="eggNOG" id="COG0293">
    <property type="taxonomic scope" value="Bacteria"/>
</dbReference>
<dbReference type="HOGENOM" id="CLU_009422_4_0_5"/>
<dbReference type="OrthoDB" id="9790080at2"/>
<dbReference type="Proteomes" id="UP000000246">
    <property type="component" value="Chromosome"/>
</dbReference>
<dbReference type="GO" id="GO:0005737">
    <property type="term" value="C:cytoplasm"/>
    <property type="evidence" value="ECO:0007669"/>
    <property type="project" value="UniProtKB-SubCell"/>
</dbReference>
<dbReference type="GO" id="GO:0008650">
    <property type="term" value="F:rRNA (uridine-2'-O-)-methyltransferase activity"/>
    <property type="evidence" value="ECO:0007669"/>
    <property type="project" value="UniProtKB-UniRule"/>
</dbReference>
<dbReference type="FunFam" id="3.40.50.150:FF:000005">
    <property type="entry name" value="Ribosomal RNA large subunit methyltransferase E"/>
    <property type="match status" value="1"/>
</dbReference>
<dbReference type="Gene3D" id="3.40.50.150">
    <property type="entry name" value="Vaccinia Virus protein VP39"/>
    <property type="match status" value="1"/>
</dbReference>
<dbReference type="HAMAP" id="MF_01547">
    <property type="entry name" value="RNA_methyltr_E"/>
    <property type="match status" value="1"/>
</dbReference>
<dbReference type="InterPro" id="IPR050082">
    <property type="entry name" value="RNA_methyltr_RlmE"/>
</dbReference>
<dbReference type="InterPro" id="IPR002877">
    <property type="entry name" value="RNA_MeTrfase_FtsJ_dom"/>
</dbReference>
<dbReference type="InterPro" id="IPR015507">
    <property type="entry name" value="rRNA-MeTfrase_E"/>
</dbReference>
<dbReference type="InterPro" id="IPR029063">
    <property type="entry name" value="SAM-dependent_MTases_sf"/>
</dbReference>
<dbReference type="PANTHER" id="PTHR10920">
    <property type="entry name" value="RIBOSOMAL RNA METHYLTRANSFERASE"/>
    <property type="match status" value="1"/>
</dbReference>
<dbReference type="PANTHER" id="PTHR10920:SF18">
    <property type="entry name" value="RRNA METHYLTRANSFERASE 2, MITOCHONDRIAL"/>
    <property type="match status" value="1"/>
</dbReference>
<dbReference type="Pfam" id="PF01728">
    <property type="entry name" value="FtsJ"/>
    <property type="match status" value="1"/>
</dbReference>
<dbReference type="PIRSF" id="PIRSF005461">
    <property type="entry name" value="23S_rRNA_mtase"/>
    <property type="match status" value="1"/>
</dbReference>
<dbReference type="SUPFAM" id="SSF53335">
    <property type="entry name" value="S-adenosyl-L-methionine-dependent methyltransferases"/>
    <property type="match status" value="1"/>
</dbReference>
<feature type="chain" id="PRO_0000300588" description="Ribosomal RNA large subunit methyltransferase E">
    <location>
        <begin position="1"/>
        <end position="231"/>
    </location>
</feature>
<feature type="active site" description="Proton acceptor" evidence="1">
    <location>
        <position position="179"/>
    </location>
</feature>
<feature type="binding site" evidence="1">
    <location>
        <position position="76"/>
    </location>
    <ligand>
        <name>S-adenosyl-L-methionine</name>
        <dbReference type="ChEBI" id="CHEBI:59789"/>
    </ligand>
</feature>
<feature type="binding site" evidence="1">
    <location>
        <position position="78"/>
    </location>
    <ligand>
        <name>S-adenosyl-L-methionine</name>
        <dbReference type="ChEBI" id="CHEBI:59789"/>
    </ligand>
</feature>
<feature type="binding site" evidence="1">
    <location>
        <position position="99"/>
    </location>
    <ligand>
        <name>S-adenosyl-L-methionine</name>
        <dbReference type="ChEBI" id="CHEBI:59789"/>
    </ligand>
</feature>
<feature type="binding site" evidence="1">
    <location>
        <position position="115"/>
    </location>
    <ligand>
        <name>S-adenosyl-L-methionine</name>
        <dbReference type="ChEBI" id="CHEBI:59789"/>
    </ligand>
</feature>
<feature type="binding site" evidence="1">
    <location>
        <position position="139"/>
    </location>
    <ligand>
        <name>S-adenosyl-L-methionine</name>
        <dbReference type="ChEBI" id="CHEBI:59789"/>
    </ligand>
</feature>
<sequence>MAKDTTGRMHVQVKTGGKRKLSSKLWLERQLNDPYVAQAKRDGYRSRATYKLIEIDDKYHLLKPGMTVVDLGAAPGGWSQIAARRVGAEAGKGKVIAIDLLEMGEVPGVTFTQMDFHAQDAPEKLRAMLGGRADVVMSDMAANTTGHRKTDQLRIVGLVELAAHFAGEVLKPGGSFLAKTFQSGADAELLAQLKRDYATVRHVKPAASRQDSSERYVLAMGFRGGEPAELL</sequence>
<comment type="function">
    <text evidence="1">Specifically methylates the uridine in position 2552 of 23S rRNA at the 2'-O position of the ribose in the fully assembled 50S ribosomal subunit.</text>
</comment>
<comment type="catalytic activity">
    <reaction evidence="1">
        <text>uridine(2552) in 23S rRNA + S-adenosyl-L-methionine = 2'-O-methyluridine(2552) in 23S rRNA + S-adenosyl-L-homocysteine + H(+)</text>
        <dbReference type="Rhea" id="RHEA:42720"/>
        <dbReference type="Rhea" id="RHEA-COMP:10202"/>
        <dbReference type="Rhea" id="RHEA-COMP:10203"/>
        <dbReference type="ChEBI" id="CHEBI:15378"/>
        <dbReference type="ChEBI" id="CHEBI:57856"/>
        <dbReference type="ChEBI" id="CHEBI:59789"/>
        <dbReference type="ChEBI" id="CHEBI:65315"/>
        <dbReference type="ChEBI" id="CHEBI:74478"/>
        <dbReference type="EC" id="2.1.1.166"/>
    </reaction>
</comment>
<comment type="subcellular location">
    <subcellularLocation>
        <location evidence="1">Cytoplasm</location>
    </subcellularLocation>
</comment>
<comment type="similarity">
    <text evidence="1">Belongs to the class I-like SAM-binding methyltransferase superfamily. RNA methyltransferase RlmE family.</text>
</comment>
<accession>A5EHP2</accession>
<keyword id="KW-0963">Cytoplasm</keyword>
<keyword id="KW-0489">Methyltransferase</keyword>
<keyword id="KW-1185">Reference proteome</keyword>
<keyword id="KW-0698">rRNA processing</keyword>
<keyword id="KW-0949">S-adenosyl-L-methionine</keyword>
<keyword id="KW-0808">Transferase</keyword>
<protein>
    <recommendedName>
        <fullName evidence="1">Ribosomal RNA large subunit methyltransferase E</fullName>
        <ecNumber evidence="1">2.1.1.166</ecNumber>
    </recommendedName>
    <alternativeName>
        <fullName evidence="1">23S rRNA Um2552 methyltransferase</fullName>
    </alternativeName>
    <alternativeName>
        <fullName evidence="1">rRNA (uridine-2'-O-)-methyltransferase</fullName>
    </alternativeName>
</protein>